<name>RS8_TOLAT</name>
<comment type="function">
    <text evidence="1">One of the primary rRNA binding proteins, it binds directly to 16S rRNA central domain where it helps coordinate assembly of the platform of the 30S subunit.</text>
</comment>
<comment type="subunit">
    <text evidence="1">Part of the 30S ribosomal subunit. Contacts proteins S5 and S12.</text>
</comment>
<comment type="similarity">
    <text evidence="1">Belongs to the universal ribosomal protein uS8 family.</text>
</comment>
<proteinExistence type="inferred from homology"/>
<accession>C4L7U4</accession>
<organism>
    <name type="scientific">Tolumonas auensis (strain DSM 9187 / NBRC 110442 / TA 4)</name>
    <dbReference type="NCBI Taxonomy" id="595494"/>
    <lineage>
        <taxon>Bacteria</taxon>
        <taxon>Pseudomonadati</taxon>
        <taxon>Pseudomonadota</taxon>
        <taxon>Gammaproteobacteria</taxon>
        <taxon>Aeromonadales</taxon>
        <taxon>Aeromonadaceae</taxon>
        <taxon>Tolumonas</taxon>
    </lineage>
</organism>
<evidence type="ECO:0000255" key="1">
    <source>
        <dbReference type="HAMAP-Rule" id="MF_01302"/>
    </source>
</evidence>
<evidence type="ECO:0000305" key="2"/>
<protein>
    <recommendedName>
        <fullName evidence="1">Small ribosomal subunit protein uS8</fullName>
    </recommendedName>
    <alternativeName>
        <fullName evidence="2">30S ribosomal protein S8</fullName>
    </alternativeName>
</protein>
<reference key="1">
    <citation type="submission" date="2009-05" db="EMBL/GenBank/DDBJ databases">
        <title>Complete sequence of Tolumonas auensis DSM 9187.</title>
        <authorList>
            <consortium name="US DOE Joint Genome Institute"/>
            <person name="Lucas S."/>
            <person name="Copeland A."/>
            <person name="Lapidus A."/>
            <person name="Glavina del Rio T."/>
            <person name="Tice H."/>
            <person name="Bruce D."/>
            <person name="Goodwin L."/>
            <person name="Pitluck S."/>
            <person name="Chertkov O."/>
            <person name="Brettin T."/>
            <person name="Detter J.C."/>
            <person name="Han C."/>
            <person name="Larimer F."/>
            <person name="Land M."/>
            <person name="Hauser L."/>
            <person name="Kyrpides N."/>
            <person name="Mikhailova N."/>
            <person name="Spring S."/>
            <person name="Beller H."/>
        </authorList>
    </citation>
    <scope>NUCLEOTIDE SEQUENCE [LARGE SCALE GENOMIC DNA]</scope>
    <source>
        <strain>DSM 9187 / NBRC 110442 / TA 4</strain>
    </source>
</reference>
<dbReference type="EMBL" id="CP001616">
    <property type="protein sequence ID" value="ACQ91743.1"/>
    <property type="molecule type" value="Genomic_DNA"/>
</dbReference>
<dbReference type="RefSeq" id="WP_012728342.1">
    <property type="nucleotide sequence ID" value="NC_012691.1"/>
</dbReference>
<dbReference type="SMR" id="C4L7U4"/>
<dbReference type="STRING" id="595494.Tola_0113"/>
<dbReference type="KEGG" id="tau:Tola_0113"/>
<dbReference type="eggNOG" id="COG0096">
    <property type="taxonomic scope" value="Bacteria"/>
</dbReference>
<dbReference type="HOGENOM" id="CLU_098428_0_0_6"/>
<dbReference type="OrthoDB" id="9802617at2"/>
<dbReference type="Proteomes" id="UP000009073">
    <property type="component" value="Chromosome"/>
</dbReference>
<dbReference type="GO" id="GO:1990904">
    <property type="term" value="C:ribonucleoprotein complex"/>
    <property type="evidence" value="ECO:0007669"/>
    <property type="project" value="UniProtKB-KW"/>
</dbReference>
<dbReference type="GO" id="GO:0005840">
    <property type="term" value="C:ribosome"/>
    <property type="evidence" value="ECO:0007669"/>
    <property type="project" value="UniProtKB-KW"/>
</dbReference>
<dbReference type="GO" id="GO:0019843">
    <property type="term" value="F:rRNA binding"/>
    <property type="evidence" value="ECO:0007669"/>
    <property type="project" value="UniProtKB-UniRule"/>
</dbReference>
<dbReference type="GO" id="GO:0003735">
    <property type="term" value="F:structural constituent of ribosome"/>
    <property type="evidence" value="ECO:0007669"/>
    <property type="project" value="InterPro"/>
</dbReference>
<dbReference type="GO" id="GO:0006412">
    <property type="term" value="P:translation"/>
    <property type="evidence" value="ECO:0007669"/>
    <property type="project" value="UniProtKB-UniRule"/>
</dbReference>
<dbReference type="FunFam" id="3.30.1370.30:FF:000003">
    <property type="entry name" value="30S ribosomal protein S8"/>
    <property type="match status" value="1"/>
</dbReference>
<dbReference type="FunFam" id="3.30.1490.10:FF:000001">
    <property type="entry name" value="30S ribosomal protein S8"/>
    <property type="match status" value="1"/>
</dbReference>
<dbReference type="Gene3D" id="3.30.1370.30">
    <property type="match status" value="1"/>
</dbReference>
<dbReference type="Gene3D" id="3.30.1490.10">
    <property type="match status" value="1"/>
</dbReference>
<dbReference type="HAMAP" id="MF_01302_B">
    <property type="entry name" value="Ribosomal_uS8_B"/>
    <property type="match status" value="1"/>
</dbReference>
<dbReference type="InterPro" id="IPR000630">
    <property type="entry name" value="Ribosomal_uS8"/>
</dbReference>
<dbReference type="InterPro" id="IPR047863">
    <property type="entry name" value="Ribosomal_uS8_CS"/>
</dbReference>
<dbReference type="InterPro" id="IPR035987">
    <property type="entry name" value="Ribosomal_uS8_sf"/>
</dbReference>
<dbReference type="NCBIfam" id="NF001109">
    <property type="entry name" value="PRK00136.1"/>
    <property type="match status" value="1"/>
</dbReference>
<dbReference type="PANTHER" id="PTHR11758">
    <property type="entry name" value="40S RIBOSOMAL PROTEIN S15A"/>
    <property type="match status" value="1"/>
</dbReference>
<dbReference type="Pfam" id="PF00410">
    <property type="entry name" value="Ribosomal_S8"/>
    <property type="match status" value="1"/>
</dbReference>
<dbReference type="SUPFAM" id="SSF56047">
    <property type="entry name" value="Ribosomal protein S8"/>
    <property type="match status" value="1"/>
</dbReference>
<dbReference type="PROSITE" id="PS00053">
    <property type="entry name" value="RIBOSOMAL_S8"/>
    <property type="match status" value="1"/>
</dbReference>
<sequence>MSMQDPIADMLTRIRNGQAAHKVSVSMPSSKLKVAIANLLKEEGYIADIKVSGDVKPELEIELKYFQGKPVVELIQRVSRPGLRIYKKRGDLPKIMNGLGIAVVSTSKGVMTDRAARKAGMGGEIICYVA</sequence>
<feature type="chain" id="PRO_1000214275" description="Small ribosomal subunit protein uS8">
    <location>
        <begin position="1"/>
        <end position="130"/>
    </location>
</feature>
<keyword id="KW-1185">Reference proteome</keyword>
<keyword id="KW-0687">Ribonucleoprotein</keyword>
<keyword id="KW-0689">Ribosomal protein</keyword>
<keyword id="KW-0694">RNA-binding</keyword>
<keyword id="KW-0699">rRNA-binding</keyword>
<gene>
    <name evidence="1" type="primary">rpsH</name>
    <name type="ordered locus">Tola_0113</name>
</gene>